<dbReference type="EC" id="1.1.1.195" evidence="1"/>
<dbReference type="EMBL" id="Y16848">
    <property type="protein sequence ID" value="CAA76418.1"/>
    <property type="molecule type" value="Genomic_DNA"/>
</dbReference>
<dbReference type="EMBL" id="AY302075">
    <property type="protein sequence ID" value="AAP59428.1"/>
    <property type="molecule type" value="mRNA"/>
</dbReference>
<dbReference type="EMBL" id="AL035538">
    <property type="protein sequence ID" value="CAB37537.1"/>
    <property type="molecule type" value="Genomic_DNA"/>
</dbReference>
<dbReference type="EMBL" id="AL161592">
    <property type="protein sequence ID" value="CAB80462.1"/>
    <property type="molecule type" value="Genomic_DNA"/>
</dbReference>
<dbReference type="EMBL" id="CP002687">
    <property type="protein sequence ID" value="AEE86858.1"/>
    <property type="molecule type" value="Genomic_DNA"/>
</dbReference>
<dbReference type="PIR" id="T05624">
    <property type="entry name" value="T05624"/>
</dbReference>
<dbReference type="RefSeq" id="NP_195510.1">
    <property type="nucleotide sequence ID" value="NM_119958.4"/>
</dbReference>
<dbReference type="SMR" id="O65621"/>
<dbReference type="FunCoup" id="O65621">
    <property type="interactions" value="136"/>
</dbReference>
<dbReference type="STRING" id="3702.O65621"/>
<dbReference type="PaxDb" id="3702-AT4G37970.1"/>
<dbReference type="ProteomicsDB" id="240312"/>
<dbReference type="EnsemblPlants" id="AT4G37970.1">
    <property type="protein sequence ID" value="AT4G37970.1"/>
    <property type="gene ID" value="AT4G37970"/>
</dbReference>
<dbReference type="GeneID" id="829953"/>
<dbReference type="Gramene" id="AT4G37970.1">
    <property type="protein sequence ID" value="AT4G37970.1"/>
    <property type="gene ID" value="AT4G37970"/>
</dbReference>
<dbReference type="KEGG" id="ath:AT4G37970"/>
<dbReference type="Araport" id="AT4G37970"/>
<dbReference type="TAIR" id="AT4G37970">
    <property type="gene designation" value="CAD6"/>
</dbReference>
<dbReference type="eggNOG" id="KOG0023">
    <property type="taxonomic scope" value="Eukaryota"/>
</dbReference>
<dbReference type="HOGENOM" id="CLU_026673_20_2_1"/>
<dbReference type="InParanoid" id="O65621"/>
<dbReference type="OMA" id="TNGWKRA"/>
<dbReference type="PhylomeDB" id="O65621"/>
<dbReference type="BioCyc" id="ARA:AT4G37970-MONOMER"/>
<dbReference type="UniPathway" id="UPA00711"/>
<dbReference type="PRO" id="PR:O65621"/>
<dbReference type="Proteomes" id="UP000006548">
    <property type="component" value="Chromosome 4"/>
</dbReference>
<dbReference type="ExpressionAtlas" id="O65621">
    <property type="expression patterns" value="baseline and differential"/>
</dbReference>
<dbReference type="GO" id="GO:0045551">
    <property type="term" value="F:cinnamyl-alcohol dehydrogenase activity"/>
    <property type="evidence" value="ECO:0007669"/>
    <property type="project" value="UniProtKB-EC"/>
</dbReference>
<dbReference type="GO" id="GO:0050268">
    <property type="term" value="F:coniferyl-alcohol dehydrogenase activity"/>
    <property type="evidence" value="ECO:0007669"/>
    <property type="project" value="RHEA"/>
</dbReference>
<dbReference type="GO" id="GO:0008270">
    <property type="term" value="F:zinc ion binding"/>
    <property type="evidence" value="ECO:0007669"/>
    <property type="project" value="InterPro"/>
</dbReference>
<dbReference type="GO" id="GO:0009809">
    <property type="term" value="P:lignin biosynthetic process"/>
    <property type="evidence" value="ECO:0000270"/>
    <property type="project" value="UniProtKB"/>
</dbReference>
<dbReference type="CDD" id="cd05283">
    <property type="entry name" value="CAD1"/>
    <property type="match status" value="1"/>
</dbReference>
<dbReference type="FunFam" id="3.40.50.720:FF:000022">
    <property type="entry name" value="Cinnamyl alcohol dehydrogenase"/>
    <property type="match status" value="1"/>
</dbReference>
<dbReference type="FunFam" id="3.90.180.10:FF:000004">
    <property type="entry name" value="probable cinnamyl alcohol dehydrogenase"/>
    <property type="match status" value="1"/>
</dbReference>
<dbReference type="FunFam" id="3.90.180.10:FF:000100">
    <property type="entry name" value="Putative cinnamyl alcohol dehydrogenase 6"/>
    <property type="match status" value="1"/>
</dbReference>
<dbReference type="Gene3D" id="3.90.180.10">
    <property type="entry name" value="Medium-chain alcohol dehydrogenases, catalytic domain"/>
    <property type="match status" value="1"/>
</dbReference>
<dbReference type="Gene3D" id="3.40.50.720">
    <property type="entry name" value="NAD(P)-binding Rossmann-like Domain"/>
    <property type="match status" value="1"/>
</dbReference>
<dbReference type="InterPro" id="IPR013149">
    <property type="entry name" value="ADH-like_C"/>
</dbReference>
<dbReference type="InterPro" id="IPR013154">
    <property type="entry name" value="ADH-like_N"/>
</dbReference>
<dbReference type="InterPro" id="IPR002328">
    <property type="entry name" value="ADH_Zn_CS"/>
</dbReference>
<dbReference type="InterPro" id="IPR047109">
    <property type="entry name" value="CAD-like"/>
</dbReference>
<dbReference type="InterPro" id="IPR011032">
    <property type="entry name" value="GroES-like_sf"/>
</dbReference>
<dbReference type="InterPro" id="IPR036291">
    <property type="entry name" value="NAD(P)-bd_dom_sf"/>
</dbReference>
<dbReference type="InterPro" id="IPR020843">
    <property type="entry name" value="PKS_ER"/>
</dbReference>
<dbReference type="PANTHER" id="PTHR42683">
    <property type="entry name" value="ALDEHYDE REDUCTASE"/>
    <property type="match status" value="1"/>
</dbReference>
<dbReference type="Pfam" id="PF08240">
    <property type="entry name" value="ADH_N"/>
    <property type="match status" value="1"/>
</dbReference>
<dbReference type="Pfam" id="PF00107">
    <property type="entry name" value="ADH_zinc_N"/>
    <property type="match status" value="1"/>
</dbReference>
<dbReference type="SMART" id="SM00829">
    <property type="entry name" value="PKS_ER"/>
    <property type="match status" value="1"/>
</dbReference>
<dbReference type="SUPFAM" id="SSF50129">
    <property type="entry name" value="GroES-like"/>
    <property type="match status" value="1"/>
</dbReference>
<dbReference type="SUPFAM" id="SSF51735">
    <property type="entry name" value="NAD(P)-binding Rossmann-fold domains"/>
    <property type="match status" value="1"/>
</dbReference>
<dbReference type="PROSITE" id="PS00059">
    <property type="entry name" value="ADH_ZINC"/>
    <property type="match status" value="1"/>
</dbReference>
<name>CADH6_ARATH</name>
<gene>
    <name type="primary">CAD6</name>
    <name type="synonym">CAD3</name>
    <name type="synonym">CADA</name>
    <name type="synonym">LCAD-A</name>
    <name type="ordered locus">At4g37970</name>
    <name type="ORF">F20D10.90</name>
</gene>
<evidence type="ECO:0000250" key="1">
    <source>
        <dbReference type="UniProtKB" id="O49482"/>
    </source>
</evidence>
<evidence type="ECO:0000269" key="2">
    <source>
    </source>
</evidence>
<evidence type="ECO:0000269" key="3">
    <source>
    </source>
</evidence>
<evidence type="ECO:0000305" key="4"/>
<protein>
    <recommendedName>
        <fullName>Probable cinnamyl alcohol dehydrogenase 6</fullName>
        <shortName>AtCAD6</shortName>
        <ecNumber evidence="1">1.1.1.195</ecNumber>
    </recommendedName>
    <alternativeName>
        <fullName>Cinnamyl alcohol dehydrogenase-like protein A</fullName>
    </alternativeName>
</protein>
<accession>O65621</accession>
<reference key="1">
    <citation type="journal article" date="2000" name="Plant Mol. Biol.">
        <title>Organization and structural evolution of four multigene families in Arabidopsis thaliana: AtLCAD, AtLGT, AtMYST and AtHD-GL2.</title>
        <authorList>
            <person name="Tavares R."/>
            <person name="Aubourg S."/>
            <person name="Lecharny A."/>
            <person name="Kreis M."/>
        </authorList>
    </citation>
    <scope>NUCLEOTIDE SEQUENCE [GENOMIC DNA]</scope>
    <source>
        <strain>cv. Columbia</strain>
    </source>
</reference>
<reference key="2">
    <citation type="journal article" date="2004" name="Proc. Natl. Acad. Sci. U.S.A.">
        <title>Functional reclassification of the putative cinnamyl alcohol dehydrogenase multigene family in Arabidopsis.</title>
        <authorList>
            <person name="Kim S.-J."/>
            <person name="Kim M.-R."/>
            <person name="Bedgar D.L."/>
            <person name="Moinuddin S.G.A."/>
            <person name="Cardenas C.L."/>
            <person name="Davin L.B."/>
            <person name="Kang C."/>
            <person name="Lewis N.G."/>
        </authorList>
    </citation>
    <scope>NUCLEOTIDE SEQUENCE [MRNA]</scope>
    <scope>GENE FAMILY</scope>
    <scope>NOMENCLATURE</scope>
</reference>
<reference key="3">
    <citation type="journal article" date="1999" name="Nature">
        <title>Sequence and analysis of chromosome 4 of the plant Arabidopsis thaliana.</title>
        <authorList>
            <person name="Mayer K.F.X."/>
            <person name="Schueller C."/>
            <person name="Wambutt R."/>
            <person name="Murphy G."/>
            <person name="Volckaert G."/>
            <person name="Pohl T."/>
            <person name="Duesterhoeft A."/>
            <person name="Stiekema W."/>
            <person name="Entian K.-D."/>
            <person name="Terryn N."/>
            <person name="Harris B."/>
            <person name="Ansorge W."/>
            <person name="Brandt P."/>
            <person name="Grivell L.A."/>
            <person name="Rieger M."/>
            <person name="Weichselgartner M."/>
            <person name="de Simone V."/>
            <person name="Obermaier B."/>
            <person name="Mache R."/>
            <person name="Mueller M."/>
            <person name="Kreis M."/>
            <person name="Delseny M."/>
            <person name="Puigdomenech P."/>
            <person name="Watson M."/>
            <person name="Schmidtheini T."/>
            <person name="Reichert B."/>
            <person name="Portetelle D."/>
            <person name="Perez-Alonso M."/>
            <person name="Boutry M."/>
            <person name="Bancroft I."/>
            <person name="Vos P."/>
            <person name="Hoheisel J."/>
            <person name="Zimmermann W."/>
            <person name="Wedler H."/>
            <person name="Ridley P."/>
            <person name="Langham S.-A."/>
            <person name="McCullagh B."/>
            <person name="Bilham L."/>
            <person name="Robben J."/>
            <person name="van der Schueren J."/>
            <person name="Grymonprez B."/>
            <person name="Chuang Y.-J."/>
            <person name="Vandenbussche F."/>
            <person name="Braeken M."/>
            <person name="Weltjens I."/>
            <person name="Voet M."/>
            <person name="Bastiaens I."/>
            <person name="Aert R."/>
            <person name="Defoor E."/>
            <person name="Weitzenegger T."/>
            <person name="Bothe G."/>
            <person name="Ramsperger U."/>
            <person name="Hilbert H."/>
            <person name="Braun M."/>
            <person name="Holzer E."/>
            <person name="Brandt A."/>
            <person name="Peters S."/>
            <person name="van Staveren M."/>
            <person name="Dirkse W."/>
            <person name="Mooijman P."/>
            <person name="Klein Lankhorst R."/>
            <person name="Rose M."/>
            <person name="Hauf J."/>
            <person name="Koetter P."/>
            <person name="Berneiser S."/>
            <person name="Hempel S."/>
            <person name="Feldpausch M."/>
            <person name="Lamberth S."/>
            <person name="Van den Daele H."/>
            <person name="De Keyser A."/>
            <person name="Buysshaert C."/>
            <person name="Gielen J."/>
            <person name="Villarroel R."/>
            <person name="De Clercq R."/>
            <person name="van Montagu M."/>
            <person name="Rogers J."/>
            <person name="Cronin A."/>
            <person name="Quail M.A."/>
            <person name="Bray-Allen S."/>
            <person name="Clark L."/>
            <person name="Doggett J."/>
            <person name="Hall S."/>
            <person name="Kay M."/>
            <person name="Lennard N."/>
            <person name="McLay K."/>
            <person name="Mayes R."/>
            <person name="Pettett A."/>
            <person name="Rajandream M.A."/>
            <person name="Lyne M."/>
            <person name="Benes V."/>
            <person name="Rechmann S."/>
            <person name="Borkova D."/>
            <person name="Bloecker H."/>
            <person name="Scharfe M."/>
            <person name="Grimm M."/>
            <person name="Loehnert T.-H."/>
            <person name="Dose S."/>
            <person name="de Haan M."/>
            <person name="Maarse A.C."/>
            <person name="Schaefer M."/>
            <person name="Mueller-Auer S."/>
            <person name="Gabel C."/>
            <person name="Fuchs M."/>
            <person name="Fartmann B."/>
            <person name="Granderath K."/>
            <person name="Dauner D."/>
            <person name="Herzl A."/>
            <person name="Neumann S."/>
            <person name="Argiriou A."/>
            <person name="Vitale D."/>
            <person name="Liguori R."/>
            <person name="Piravandi E."/>
            <person name="Massenet O."/>
            <person name="Quigley F."/>
            <person name="Clabauld G."/>
            <person name="Muendlein A."/>
            <person name="Felber R."/>
            <person name="Schnabl S."/>
            <person name="Hiller R."/>
            <person name="Schmidt W."/>
            <person name="Lecharny A."/>
            <person name="Aubourg S."/>
            <person name="Chefdor F."/>
            <person name="Cooke R."/>
            <person name="Berger C."/>
            <person name="Monfort A."/>
            <person name="Casacuberta E."/>
            <person name="Gibbons T."/>
            <person name="Weber N."/>
            <person name="Vandenbol M."/>
            <person name="Bargues M."/>
            <person name="Terol J."/>
            <person name="Torres A."/>
            <person name="Perez-Perez A."/>
            <person name="Purnelle B."/>
            <person name="Bent E."/>
            <person name="Johnson S."/>
            <person name="Tacon D."/>
            <person name="Jesse T."/>
            <person name="Heijnen L."/>
            <person name="Schwarz S."/>
            <person name="Scholler P."/>
            <person name="Heber S."/>
            <person name="Francs P."/>
            <person name="Bielke C."/>
            <person name="Frishman D."/>
            <person name="Haase D."/>
            <person name="Lemcke K."/>
            <person name="Mewes H.-W."/>
            <person name="Stocker S."/>
            <person name="Zaccaria P."/>
            <person name="Bevan M."/>
            <person name="Wilson R.K."/>
            <person name="de la Bastide M."/>
            <person name="Habermann K."/>
            <person name="Parnell L."/>
            <person name="Dedhia N."/>
            <person name="Gnoj L."/>
            <person name="Schutz K."/>
            <person name="Huang E."/>
            <person name="Spiegel L."/>
            <person name="Sekhon M."/>
            <person name="Murray J."/>
            <person name="Sheet P."/>
            <person name="Cordes M."/>
            <person name="Abu-Threideh J."/>
            <person name="Stoneking T."/>
            <person name="Kalicki J."/>
            <person name="Graves T."/>
            <person name="Harmon G."/>
            <person name="Edwards J."/>
            <person name="Latreille P."/>
            <person name="Courtney L."/>
            <person name="Cloud J."/>
            <person name="Abbott A."/>
            <person name="Scott K."/>
            <person name="Johnson D."/>
            <person name="Minx P."/>
            <person name="Bentley D."/>
            <person name="Fulton B."/>
            <person name="Miller N."/>
            <person name="Greco T."/>
            <person name="Kemp K."/>
            <person name="Kramer J."/>
            <person name="Fulton L."/>
            <person name="Mardis E."/>
            <person name="Dante M."/>
            <person name="Pepin K."/>
            <person name="Hillier L.W."/>
            <person name="Nelson J."/>
            <person name="Spieth J."/>
            <person name="Ryan E."/>
            <person name="Andrews S."/>
            <person name="Geisel C."/>
            <person name="Layman D."/>
            <person name="Du H."/>
            <person name="Ali J."/>
            <person name="Berghoff A."/>
            <person name="Jones K."/>
            <person name="Drone K."/>
            <person name="Cotton M."/>
            <person name="Joshu C."/>
            <person name="Antonoiu B."/>
            <person name="Zidanic M."/>
            <person name="Strong C."/>
            <person name="Sun H."/>
            <person name="Lamar B."/>
            <person name="Yordan C."/>
            <person name="Ma P."/>
            <person name="Zhong J."/>
            <person name="Preston R."/>
            <person name="Vil D."/>
            <person name="Shekher M."/>
            <person name="Matero A."/>
            <person name="Shah R."/>
            <person name="Swaby I.K."/>
            <person name="O'Shaughnessy A."/>
            <person name="Rodriguez M."/>
            <person name="Hoffman J."/>
            <person name="Till S."/>
            <person name="Granat S."/>
            <person name="Shohdy N."/>
            <person name="Hasegawa A."/>
            <person name="Hameed A."/>
            <person name="Lodhi M."/>
            <person name="Johnson A."/>
            <person name="Chen E."/>
            <person name="Marra M.A."/>
            <person name="Martienssen R."/>
            <person name="McCombie W.R."/>
        </authorList>
    </citation>
    <scope>NUCLEOTIDE SEQUENCE [LARGE SCALE GENOMIC DNA]</scope>
    <source>
        <strain>cv. Columbia</strain>
    </source>
</reference>
<reference key="4">
    <citation type="journal article" date="2017" name="Plant J.">
        <title>Araport11: a complete reannotation of the Arabidopsis thaliana reference genome.</title>
        <authorList>
            <person name="Cheng C.Y."/>
            <person name="Krishnakumar V."/>
            <person name="Chan A.P."/>
            <person name="Thibaud-Nissen F."/>
            <person name="Schobel S."/>
            <person name="Town C.D."/>
        </authorList>
    </citation>
    <scope>GENOME REANNOTATION</scope>
    <source>
        <strain>cv. Columbia</strain>
    </source>
</reference>
<reference key="5">
    <citation type="journal article" date="2006" name="Planta">
        <title>Evidence for a role of AtCAD 1 in lignification of elongating stems of Arabidopsis thaliana.</title>
        <authorList>
            <person name="Eudes A."/>
            <person name="Pollet B."/>
            <person name="Sibout R."/>
            <person name="Do C.-T."/>
            <person name="Seguin A."/>
            <person name="Lapierre C."/>
            <person name="Jouanin L."/>
        </authorList>
    </citation>
    <scope>TISSUE SPECIFICITY</scope>
</reference>
<reference key="6">
    <citation type="journal article" date="2007" name="Phytochemistry">
        <title>Expression of cinnamyl alcohol dehydrogenases and their putative homologues during Arabidopsis thaliana growth and development: lessons for database annotations?</title>
        <authorList>
            <person name="Kim S.-J."/>
            <person name="Kim K.-W."/>
            <person name="Cho M.-H."/>
            <person name="Franceschi V.R."/>
            <person name="Davin L.B."/>
            <person name="Lewis N.G."/>
        </authorList>
    </citation>
    <scope>TISSUE SPECIFICITY</scope>
</reference>
<keyword id="KW-0438">Lignin biosynthesis</keyword>
<keyword id="KW-0479">Metal-binding</keyword>
<keyword id="KW-0521">NADP</keyword>
<keyword id="KW-0560">Oxidoreductase</keyword>
<keyword id="KW-1185">Reference proteome</keyword>
<keyword id="KW-0862">Zinc</keyword>
<organism>
    <name type="scientific">Arabidopsis thaliana</name>
    <name type="common">Mouse-ear cress</name>
    <dbReference type="NCBI Taxonomy" id="3702"/>
    <lineage>
        <taxon>Eukaryota</taxon>
        <taxon>Viridiplantae</taxon>
        <taxon>Streptophyta</taxon>
        <taxon>Embryophyta</taxon>
        <taxon>Tracheophyta</taxon>
        <taxon>Spermatophyta</taxon>
        <taxon>Magnoliopsida</taxon>
        <taxon>eudicotyledons</taxon>
        <taxon>Gunneridae</taxon>
        <taxon>Pentapetalae</taxon>
        <taxon>rosids</taxon>
        <taxon>malvids</taxon>
        <taxon>Brassicales</taxon>
        <taxon>Brassicaceae</taxon>
        <taxon>Camelineae</taxon>
        <taxon>Arabidopsis</taxon>
    </lineage>
</organism>
<proteinExistence type="evidence at transcript level"/>
<feature type="chain" id="PRO_0000382639" description="Probable cinnamyl alcohol dehydrogenase 6">
    <location>
        <begin position="1"/>
        <end position="363"/>
    </location>
</feature>
<feature type="binding site" evidence="1">
    <location>
        <position position="51"/>
    </location>
    <ligand>
        <name>Zn(2+)</name>
        <dbReference type="ChEBI" id="CHEBI:29105"/>
        <label>1</label>
        <note>catalytic</note>
    </ligand>
</feature>
<feature type="binding site" evidence="1">
    <location>
        <position position="53"/>
    </location>
    <ligand>
        <name>NADP(+)</name>
        <dbReference type="ChEBI" id="CHEBI:58349"/>
    </ligand>
</feature>
<feature type="binding site" evidence="1">
    <location>
        <position position="73"/>
    </location>
    <ligand>
        <name>Zn(2+)</name>
        <dbReference type="ChEBI" id="CHEBI:29105"/>
        <label>1</label>
        <note>catalytic</note>
    </ligand>
</feature>
<feature type="binding site" evidence="1">
    <location>
        <position position="74"/>
    </location>
    <ligand>
        <name>Zn(2+)</name>
        <dbReference type="ChEBI" id="CHEBI:29105"/>
        <label>1</label>
        <note>catalytic</note>
    </ligand>
</feature>
<feature type="binding site" evidence="1">
    <location>
        <position position="104"/>
    </location>
    <ligand>
        <name>Zn(2+)</name>
        <dbReference type="ChEBI" id="CHEBI:29105"/>
        <label>2</label>
    </ligand>
</feature>
<feature type="binding site" evidence="1">
    <location>
        <position position="107"/>
    </location>
    <ligand>
        <name>Zn(2+)</name>
        <dbReference type="ChEBI" id="CHEBI:29105"/>
        <label>2</label>
    </ligand>
</feature>
<feature type="binding site" evidence="1">
    <location>
        <position position="110"/>
    </location>
    <ligand>
        <name>Zn(2+)</name>
        <dbReference type="ChEBI" id="CHEBI:29105"/>
        <label>2</label>
    </ligand>
</feature>
<feature type="binding site" evidence="1">
    <location>
        <position position="118"/>
    </location>
    <ligand>
        <name>Zn(2+)</name>
        <dbReference type="ChEBI" id="CHEBI:29105"/>
        <label>2</label>
    </ligand>
</feature>
<feature type="binding site" evidence="1">
    <location>
        <position position="167"/>
    </location>
    <ligand>
        <name>Zn(2+)</name>
        <dbReference type="ChEBI" id="CHEBI:29105"/>
        <label>1</label>
        <note>catalytic</note>
    </ligand>
</feature>
<feature type="binding site" evidence="1">
    <location>
        <position position="171"/>
    </location>
    <ligand>
        <name>NADP(+)</name>
        <dbReference type="ChEBI" id="CHEBI:58349"/>
    </ligand>
</feature>
<feature type="binding site" evidence="1">
    <location>
        <begin position="192"/>
        <end position="197"/>
    </location>
    <ligand>
        <name>NADP(+)</name>
        <dbReference type="ChEBI" id="CHEBI:58349"/>
    </ligand>
</feature>
<feature type="binding site" evidence="1">
    <location>
        <begin position="215"/>
        <end position="220"/>
    </location>
    <ligand>
        <name>NADP(+)</name>
        <dbReference type="ChEBI" id="CHEBI:58349"/>
    </ligand>
</feature>
<feature type="binding site" evidence="1">
    <location>
        <position position="255"/>
    </location>
    <ligand>
        <name>NADP(+)</name>
        <dbReference type="ChEBI" id="CHEBI:58349"/>
    </ligand>
</feature>
<feature type="binding site" evidence="1">
    <location>
        <position position="279"/>
    </location>
    <ligand>
        <name>NADP(+)</name>
        <dbReference type="ChEBI" id="CHEBI:58349"/>
    </ligand>
</feature>
<feature type="binding site" evidence="1">
    <location>
        <begin position="302"/>
        <end position="304"/>
    </location>
    <ligand>
        <name>NADP(+)</name>
        <dbReference type="ChEBI" id="CHEBI:58349"/>
    </ligand>
</feature>
<comment type="function">
    <text evidence="1">Involved in lignin biosynthesis. Catalyzes the final step specific for the production of lignin monomers. Catalyzes the NADPH-dependent reduction of coniferaldehyde, 5-hydroxyconiferaldehyde, sinapaldehyde, 4-coumaraldehyde and caffeyl aldehyde to their respective alcohols.</text>
</comment>
<comment type="catalytic activity">
    <reaction evidence="1">
        <text>(E)-cinnamyl alcohol + NADP(+) = (E)-cinnamaldehyde + NADPH + H(+)</text>
        <dbReference type="Rhea" id="RHEA:10392"/>
        <dbReference type="ChEBI" id="CHEBI:15378"/>
        <dbReference type="ChEBI" id="CHEBI:16731"/>
        <dbReference type="ChEBI" id="CHEBI:33227"/>
        <dbReference type="ChEBI" id="CHEBI:57783"/>
        <dbReference type="ChEBI" id="CHEBI:58349"/>
        <dbReference type="EC" id="1.1.1.195"/>
    </reaction>
    <physiologicalReaction direction="right-to-left" evidence="1">
        <dbReference type="Rhea" id="RHEA:10394"/>
    </physiologicalReaction>
</comment>
<comment type="catalytic activity">
    <reaction evidence="1">
        <text>(E)-coniferol + NADP(+) = (E)-coniferaldehyde + NADPH + H(+)</text>
        <dbReference type="Rhea" id="RHEA:22444"/>
        <dbReference type="ChEBI" id="CHEBI:15378"/>
        <dbReference type="ChEBI" id="CHEBI:16547"/>
        <dbReference type="ChEBI" id="CHEBI:17745"/>
        <dbReference type="ChEBI" id="CHEBI:57783"/>
        <dbReference type="ChEBI" id="CHEBI:58349"/>
        <dbReference type="EC" id="1.1.1.195"/>
    </reaction>
    <physiologicalReaction direction="right-to-left" evidence="1">
        <dbReference type="Rhea" id="RHEA:22446"/>
    </physiologicalReaction>
</comment>
<comment type="catalytic activity">
    <reaction evidence="1">
        <text>(E)-sinapyl alcohol + NADP(+) = (E)-sinapaldehyde + NADPH + H(+)</text>
        <dbReference type="Rhea" id="RHEA:45704"/>
        <dbReference type="ChEBI" id="CHEBI:15378"/>
        <dbReference type="ChEBI" id="CHEBI:27949"/>
        <dbReference type="ChEBI" id="CHEBI:57783"/>
        <dbReference type="ChEBI" id="CHEBI:58349"/>
        <dbReference type="ChEBI" id="CHEBI:64557"/>
        <dbReference type="EC" id="1.1.1.195"/>
    </reaction>
    <physiologicalReaction direction="right-to-left" evidence="1">
        <dbReference type="Rhea" id="RHEA:45706"/>
    </physiologicalReaction>
</comment>
<comment type="catalytic activity">
    <reaction evidence="1">
        <text>(E)-4-coumaroyl alcohol + NADP(+) = (E)-4-coumaraldehyde + NADPH + H(+)</text>
        <dbReference type="Rhea" id="RHEA:45724"/>
        <dbReference type="ChEBI" id="CHEBI:15378"/>
        <dbReference type="ChEBI" id="CHEBI:28353"/>
        <dbReference type="ChEBI" id="CHEBI:57783"/>
        <dbReference type="ChEBI" id="CHEBI:58349"/>
        <dbReference type="ChEBI" id="CHEBI:64555"/>
        <dbReference type="EC" id="1.1.1.195"/>
    </reaction>
    <physiologicalReaction direction="right-to-left" evidence="1">
        <dbReference type="Rhea" id="RHEA:45726"/>
    </physiologicalReaction>
</comment>
<comment type="catalytic activity">
    <reaction evidence="1">
        <text>(E)-caffeyl alcohol + NADP(+) = (E)-caffeyl aldehyde + NADPH + H(+)</text>
        <dbReference type="Rhea" id="RHEA:45728"/>
        <dbReference type="ChEBI" id="CHEBI:15378"/>
        <dbReference type="ChEBI" id="CHEBI:28323"/>
        <dbReference type="ChEBI" id="CHEBI:31334"/>
        <dbReference type="ChEBI" id="CHEBI:57783"/>
        <dbReference type="ChEBI" id="CHEBI:58349"/>
    </reaction>
    <physiologicalReaction direction="right-to-left" evidence="1">
        <dbReference type="Rhea" id="RHEA:45730"/>
    </physiologicalReaction>
</comment>
<comment type="cofactor">
    <cofactor evidence="1">
        <name>Zn(2+)</name>
        <dbReference type="ChEBI" id="CHEBI:29105"/>
    </cofactor>
    <text evidence="1">Binds 2 Zn(2+) ions per subunit.</text>
</comment>
<comment type="pathway">
    <text evidence="1">Aromatic compound metabolism; phenylpropanoid biosynthesis.</text>
</comment>
<comment type="subunit">
    <text evidence="1">Homodimer.</text>
</comment>
<comment type="tissue specificity">
    <text evidence="2 3">Expressed in the primary and lateral roots, and root caps. Expressed in the hypocotyl, cotyledon veins and hydathodes. In stems, expressed in the vascular cambium, interfascicular cambium and developing xylem. Expressed in the style, anthers, stamen filaments, vascular tissues of sepals, stigmatic regions in flowers, and abscission and style regions of siliques.</text>
</comment>
<comment type="similarity">
    <text evidence="4">Belongs to the zinc-containing alcohol dehydrogenase family.</text>
</comment>
<sequence length="363" mass="39017">MERLSGEKEQSVEAFGWAARDSSGHLSPFVFSRRKTGEEEVRVKVLYCGICHSDLHCLKNEWHSSIYPLVPGHEIIGEVSEIGNKVSKFNLGDKVGVGCIVDSCRTCESCREDQENYCTKAIATYNGVHHDGTINYGGYSDHIVVDERYAVKIPHTLPLVSAAPLLCAGISMYSPMKYFGLTGPDKHVGIVGLGGLGHIGVRFAKAFGTKVTVVSSTTGKSKDALDTLGADGFLVSTDEDQMKAAMGTMDGIIDTVSASHSISPLIGLLKSNGKLVLLGATEKPFDISAFSLILGRKSIAGSGIGGMQETQEMIDFAAEHGIKAEIEIISMDYVNTAMDRLAKGDVRYRFVIDISNTLAATRS</sequence>